<evidence type="ECO:0000255" key="1">
    <source>
        <dbReference type="HAMAP-Rule" id="MF_00171"/>
    </source>
</evidence>
<feature type="chain" id="PRO_0000428147" description="tRNA pseudouridine synthase A">
    <location>
        <begin position="1"/>
        <end position="297"/>
    </location>
</feature>
<feature type="active site" description="Nucleophile" evidence="1">
    <location>
        <position position="72"/>
    </location>
</feature>
<feature type="binding site" evidence="1">
    <location>
        <position position="144"/>
    </location>
    <ligand>
        <name>substrate</name>
    </ligand>
</feature>
<accession>P9WHP8</accession>
<accession>L0TE66</accession>
<accession>O06322</accession>
<accession>P65846</accession>
<reference key="1">
    <citation type="journal article" date="2002" name="J. Bacteriol.">
        <title>Whole-genome comparison of Mycobacterium tuberculosis clinical and laboratory strains.</title>
        <authorList>
            <person name="Fleischmann R.D."/>
            <person name="Alland D."/>
            <person name="Eisen J.A."/>
            <person name="Carpenter L."/>
            <person name="White O."/>
            <person name="Peterson J.D."/>
            <person name="DeBoy R.T."/>
            <person name="Dodson R.J."/>
            <person name="Gwinn M.L."/>
            <person name="Haft D.H."/>
            <person name="Hickey E.K."/>
            <person name="Kolonay J.F."/>
            <person name="Nelson W.C."/>
            <person name="Umayam L.A."/>
            <person name="Ermolaeva M.D."/>
            <person name="Salzberg S.L."/>
            <person name="Delcher A."/>
            <person name="Utterback T.R."/>
            <person name="Weidman J.F."/>
            <person name="Khouri H.M."/>
            <person name="Gill J."/>
            <person name="Mikula A."/>
            <person name="Bishai W."/>
            <person name="Jacobs W.R. Jr."/>
            <person name="Venter J.C."/>
            <person name="Fraser C.M."/>
        </authorList>
    </citation>
    <scope>NUCLEOTIDE SEQUENCE [LARGE SCALE GENOMIC DNA]</scope>
    <source>
        <strain>CDC 1551 / Oshkosh</strain>
    </source>
</reference>
<dbReference type="EC" id="5.4.99.12" evidence="1"/>
<dbReference type="EMBL" id="AE000516">
    <property type="protein sequence ID" value="AAK47901.1"/>
    <property type="molecule type" value="Genomic_DNA"/>
</dbReference>
<dbReference type="PIR" id="D70565">
    <property type="entry name" value="D70565"/>
</dbReference>
<dbReference type="RefSeq" id="WP_003418344.1">
    <property type="nucleotide sequence ID" value="NZ_KK341227.1"/>
</dbReference>
<dbReference type="SMR" id="P9WHP8"/>
<dbReference type="GeneID" id="45427444"/>
<dbReference type="KEGG" id="mtc:MT3562"/>
<dbReference type="HOGENOM" id="CLU_014673_0_2_11"/>
<dbReference type="Proteomes" id="UP000001020">
    <property type="component" value="Chromosome"/>
</dbReference>
<dbReference type="GO" id="GO:0003723">
    <property type="term" value="F:RNA binding"/>
    <property type="evidence" value="ECO:0007669"/>
    <property type="project" value="InterPro"/>
</dbReference>
<dbReference type="GO" id="GO:0160147">
    <property type="term" value="F:tRNA pseudouridine(38-40) synthase activity"/>
    <property type="evidence" value="ECO:0007669"/>
    <property type="project" value="UniProtKB-EC"/>
</dbReference>
<dbReference type="GO" id="GO:0031119">
    <property type="term" value="P:tRNA pseudouridine synthesis"/>
    <property type="evidence" value="ECO:0007669"/>
    <property type="project" value="UniProtKB-UniRule"/>
</dbReference>
<dbReference type="CDD" id="cd02570">
    <property type="entry name" value="PseudoU_synth_EcTruA"/>
    <property type="match status" value="1"/>
</dbReference>
<dbReference type="FunFam" id="3.30.70.580:FF:000008">
    <property type="entry name" value="tRNA pseudouridine synthase A"/>
    <property type="match status" value="1"/>
</dbReference>
<dbReference type="FunFam" id="3.30.70.660:FF:000003">
    <property type="entry name" value="tRNA pseudouridine synthase A"/>
    <property type="match status" value="1"/>
</dbReference>
<dbReference type="Gene3D" id="3.30.70.660">
    <property type="entry name" value="Pseudouridine synthase I, catalytic domain, C-terminal subdomain"/>
    <property type="match status" value="1"/>
</dbReference>
<dbReference type="Gene3D" id="3.30.70.580">
    <property type="entry name" value="Pseudouridine synthase I, catalytic domain, N-terminal subdomain"/>
    <property type="match status" value="1"/>
</dbReference>
<dbReference type="HAMAP" id="MF_00171">
    <property type="entry name" value="TruA"/>
    <property type="match status" value="1"/>
</dbReference>
<dbReference type="InterPro" id="IPR020103">
    <property type="entry name" value="PsdUridine_synth_cat_dom_sf"/>
</dbReference>
<dbReference type="InterPro" id="IPR001406">
    <property type="entry name" value="PsdUridine_synth_TruA"/>
</dbReference>
<dbReference type="InterPro" id="IPR020097">
    <property type="entry name" value="PsdUridine_synth_TruA_a/b_dom"/>
</dbReference>
<dbReference type="InterPro" id="IPR020095">
    <property type="entry name" value="PsdUridine_synth_TruA_C"/>
</dbReference>
<dbReference type="InterPro" id="IPR020094">
    <property type="entry name" value="TruA/RsuA/RluB/E/F_N"/>
</dbReference>
<dbReference type="NCBIfam" id="TIGR00071">
    <property type="entry name" value="hisT_truA"/>
    <property type="match status" value="1"/>
</dbReference>
<dbReference type="PANTHER" id="PTHR11142">
    <property type="entry name" value="PSEUDOURIDYLATE SYNTHASE"/>
    <property type="match status" value="1"/>
</dbReference>
<dbReference type="PANTHER" id="PTHR11142:SF0">
    <property type="entry name" value="TRNA PSEUDOURIDINE SYNTHASE-LIKE 1"/>
    <property type="match status" value="1"/>
</dbReference>
<dbReference type="Pfam" id="PF01416">
    <property type="entry name" value="PseudoU_synth_1"/>
    <property type="match status" value="1"/>
</dbReference>
<dbReference type="PIRSF" id="PIRSF001430">
    <property type="entry name" value="tRNA_psdUrid_synth"/>
    <property type="match status" value="1"/>
</dbReference>
<dbReference type="SUPFAM" id="SSF55120">
    <property type="entry name" value="Pseudouridine synthase"/>
    <property type="match status" value="1"/>
</dbReference>
<organism>
    <name type="scientific">Mycobacterium tuberculosis (strain CDC 1551 / Oshkosh)</name>
    <dbReference type="NCBI Taxonomy" id="83331"/>
    <lineage>
        <taxon>Bacteria</taxon>
        <taxon>Bacillati</taxon>
        <taxon>Actinomycetota</taxon>
        <taxon>Actinomycetes</taxon>
        <taxon>Mycobacteriales</taxon>
        <taxon>Mycobacteriaceae</taxon>
        <taxon>Mycobacterium</taxon>
        <taxon>Mycobacterium tuberculosis complex</taxon>
    </lineage>
</organism>
<keyword id="KW-0413">Isomerase</keyword>
<keyword id="KW-1185">Reference proteome</keyword>
<keyword id="KW-0819">tRNA processing</keyword>
<sequence>MSLTRRPPKSPPQRPPRISGVVRLRLDIAYDGTDFAGWAAQVGQRTVAGDLDAALTTIFRTPVRLRAAGRTDAGVHASGQVAHVDVPADALPNAYPRAGHVGDPEFLPLLRRLGRFLPADVRILDITRAPAGFDARFSALRRHYVYRLSTAPYGVEPQQARYITAWPRELDLDAMTAASRDLMGLHDFAAFCRHREGATTIRDLQRLDWSRAGTLVTAHVTADAFCWSMVRSLVGALLAVGEHRRATTWCRELLTATGRSSDFAVAPAHGLTLIQVDYPPDDQLASRNLVTRDVRSG</sequence>
<comment type="function">
    <text evidence="1">Formation of pseudouridine at positions 38, 39 and 40 in the anticodon stem and loop of transfer RNAs.</text>
</comment>
<comment type="catalytic activity">
    <reaction evidence="1">
        <text>uridine(38/39/40) in tRNA = pseudouridine(38/39/40) in tRNA</text>
        <dbReference type="Rhea" id="RHEA:22376"/>
        <dbReference type="Rhea" id="RHEA-COMP:10085"/>
        <dbReference type="Rhea" id="RHEA-COMP:10087"/>
        <dbReference type="ChEBI" id="CHEBI:65314"/>
        <dbReference type="ChEBI" id="CHEBI:65315"/>
        <dbReference type="EC" id="5.4.99.12"/>
    </reaction>
</comment>
<comment type="subunit">
    <text evidence="1">Homodimer.</text>
</comment>
<comment type="similarity">
    <text evidence="1">Belongs to the tRNA pseudouridine synthase TruA family.</text>
</comment>
<protein>
    <recommendedName>
        <fullName evidence="1">tRNA pseudouridine synthase A</fullName>
        <ecNumber evidence="1">5.4.99.12</ecNumber>
    </recommendedName>
    <alternativeName>
        <fullName evidence="1">tRNA pseudouridine(38-40) synthase</fullName>
    </alternativeName>
    <alternativeName>
        <fullName evidence="1">tRNA pseudouridylate synthase I</fullName>
    </alternativeName>
    <alternativeName>
        <fullName evidence="1">tRNA-uridine isomerase I</fullName>
    </alternativeName>
</protein>
<name>TRUA_MYCTO</name>
<proteinExistence type="inferred from homology"/>
<gene>
    <name evidence="1" type="primary">truA</name>
    <name type="ordered locus">MT3562</name>
</gene>